<organism>
    <name type="scientific">Arabidopsis thaliana</name>
    <name type="common">Mouse-ear cress</name>
    <dbReference type="NCBI Taxonomy" id="3702"/>
    <lineage>
        <taxon>Eukaryota</taxon>
        <taxon>Viridiplantae</taxon>
        <taxon>Streptophyta</taxon>
        <taxon>Embryophyta</taxon>
        <taxon>Tracheophyta</taxon>
        <taxon>Spermatophyta</taxon>
        <taxon>Magnoliopsida</taxon>
        <taxon>eudicotyledons</taxon>
        <taxon>Gunneridae</taxon>
        <taxon>Pentapetalae</taxon>
        <taxon>rosids</taxon>
        <taxon>malvids</taxon>
        <taxon>Brassicales</taxon>
        <taxon>Brassicaceae</taxon>
        <taxon>Camelineae</taxon>
        <taxon>Arabidopsis</taxon>
    </lineage>
</organism>
<accession>Q9C682</accession>
<comment type="subunit">
    <text evidence="2 3 4">Homodimer (Probable). Interacts with BTS and BHLH47/PYE (PubMed:20675571, PubMed:25452667).</text>
</comment>
<comment type="subcellular location">
    <subcellularLocation>
        <location evidence="1 3">Nucleus</location>
    </subcellularLocation>
</comment>
<comment type="alternative products">
    <event type="alternative splicing"/>
    <isoform>
        <id>Q9C682-1</id>
        <name>1</name>
        <sequence type="displayed"/>
    </isoform>
    <text>A number of isoforms are produced. According to EST sequences.</text>
</comment>
<reference key="1">
    <citation type="journal article" date="2003" name="Mol. Biol. Evol.">
        <title>The basic helix-loop-helix transcription factor family in plants: a genome-wide study of protein structure and functional diversity.</title>
        <authorList>
            <person name="Heim M.A."/>
            <person name="Jakoby M."/>
            <person name="Werber M."/>
            <person name="Martin C."/>
            <person name="Weisshaar B."/>
            <person name="Bailey P.C."/>
        </authorList>
    </citation>
    <scope>NUCLEOTIDE SEQUENCE [MRNA]</scope>
    <scope>GENE FAMILY</scope>
    <scope>NOMENCLATURE</scope>
    <source>
        <strain>cv. Columbia</strain>
    </source>
</reference>
<reference key="2">
    <citation type="journal article" date="2000" name="Nature">
        <title>Sequence and analysis of chromosome 1 of the plant Arabidopsis thaliana.</title>
        <authorList>
            <person name="Theologis A."/>
            <person name="Ecker J.R."/>
            <person name="Palm C.J."/>
            <person name="Federspiel N.A."/>
            <person name="Kaul S."/>
            <person name="White O."/>
            <person name="Alonso J."/>
            <person name="Altafi H."/>
            <person name="Araujo R."/>
            <person name="Bowman C.L."/>
            <person name="Brooks S.Y."/>
            <person name="Buehler E."/>
            <person name="Chan A."/>
            <person name="Chao Q."/>
            <person name="Chen H."/>
            <person name="Cheuk R.F."/>
            <person name="Chin C.W."/>
            <person name="Chung M.K."/>
            <person name="Conn L."/>
            <person name="Conway A.B."/>
            <person name="Conway A.R."/>
            <person name="Creasy T.H."/>
            <person name="Dewar K."/>
            <person name="Dunn P."/>
            <person name="Etgu P."/>
            <person name="Feldblyum T.V."/>
            <person name="Feng J.-D."/>
            <person name="Fong B."/>
            <person name="Fujii C.Y."/>
            <person name="Gill J.E."/>
            <person name="Goldsmith A.D."/>
            <person name="Haas B."/>
            <person name="Hansen N.F."/>
            <person name="Hughes B."/>
            <person name="Huizar L."/>
            <person name="Hunter J.L."/>
            <person name="Jenkins J."/>
            <person name="Johnson-Hopson C."/>
            <person name="Khan S."/>
            <person name="Khaykin E."/>
            <person name="Kim C.J."/>
            <person name="Koo H.L."/>
            <person name="Kremenetskaia I."/>
            <person name="Kurtz D.B."/>
            <person name="Kwan A."/>
            <person name="Lam B."/>
            <person name="Langin-Hooper S."/>
            <person name="Lee A."/>
            <person name="Lee J.M."/>
            <person name="Lenz C.A."/>
            <person name="Li J.H."/>
            <person name="Li Y.-P."/>
            <person name="Lin X."/>
            <person name="Liu S.X."/>
            <person name="Liu Z.A."/>
            <person name="Luros J.S."/>
            <person name="Maiti R."/>
            <person name="Marziali A."/>
            <person name="Militscher J."/>
            <person name="Miranda M."/>
            <person name="Nguyen M."/>
            <person name="Nierman W.C."/>
            <person name="Osborne B.I."/>
            <person name="Pai G."/>
            <person name="Peterson J."/>
            <person name="Pham P.K."/>
            <person name="Rizzo M."/>
            <person name="Rooney T."/>
            <person name="Rowley D."/>
            <person name="Sakano H."/>
            <person name="Salzberg S.L."/>
            <person name="Schwartz J.R."/>
            <person name="Shinn P."/>
            <person name="Southwick A.M."/>
            <person name="Sun H."/>
            <person name="Tallon L.J."/>
            <person name="Tambunga G."/>
            <person name="Toriumi M.J."/>
            <person name="Town C.D."/>
            <person name="Utterback T."/>
            <person name="Van Aken S."/>
            <person name="Vaysberg M."/>
            <person name="Vysotskaia V.S."/>
            <person name="Walker M."/>
            <person name="Wu D."/>
            <person name="Yu G."/>
            <person name="Fraser C.M."/>
            <person name="Venter J.C."/>
            <person name="Davis R.W."/>
        </authorList>
    </citation>
    <scope>NUCLEOTIDE SEQUENCE [LARGE SCALE GENOMIC DNA]</scope>
    <source>
        <strain>cv. Columbia</strain>
    </source>
</reference>
<reference key="3">
    <citation type="journal article" date="2017" name="Plant J.">
        <title>Araport11: a complete reannotation of the Arabidopsis thaliana reference genome.</title>
        <authorList>
            <person name="Cheng C.Y."/>
            <person name="Krishnakumar V."/>
            <person name="Chan A.P."/>
            <person name="Thibaud-Nissen F."/>
            <person name="Schobel S."/>
            <person name="Town C.D."/>
        </authorList>
    </citation>
    <scope>GENOME REANNOTATION</scope>
    <source>
        <strain>cv. Columbia</strain>
    </source>
</reference>
<reference key="4">
    <citation type="journal article" date="2003" name="Science">
        <title>Empirical analysis of transcriptional activity in the Arabidopsis genome.</title>
        <authorList>
            <person name="Yamada K."/>
            <person name="Lim J."/>
            <person name="Dale J.M."/>
            <person name="Chen H."/>
            <person name="Shinn P."/>
            <person name="Palm C.J."/>
            <person name="Southwick A.M."/>
            <person name="Wu H.C."/>
            <person name="Kim C.J."/>
            <person name="Nguyen M."/>
            <person name="Pham P.K."/>
            <person name="Cheuk R.F."/>
            <person name="Karlin-Newmann G."/>
            <person name="Liu S.X."/>
            <person name="Lam B."/>
            <person name="Sakano H."/>
            <person name="Wu T."/>
            <person name="Yu G."/>
            <person name="Miranda M."/>
            <person name="Quach H.L."/>
            <person name="Tripp M."/>
            <person name="Chang C.H."/>
            <person name="Lee J.M."/>
            <person name="Toriumi M.J."/>
            <person name="Chan M.M."/>
            <person name="Tang C.C."/>
            <person name="Onodera C.S."/>
            <person name="Deng J.M."/>
            <person name="Akiyama K."/>
            <person name="Ansari Y."/>
            <person name="Arakawa T."/>
            <person name="Banh J."/>
            <person name="Banno F."/>
            <person name="Bowser L."/>
            <person name="Brooks S.Y."/>
            <person name="Carninci P."/>
            <person name="Chao Q."/>
            <person name="Choy N."/>
            <person name="Enju A."/>
            <person name="Goldsmith A.D."/>
            <person name="Gurjal M."/>
            <person name="Hansen N.F."/>
            <person name="Hayashizaki Y."/>
            <person name="Johnson-Hopson C."/>
            <person name="Hsuan V.W."/>
            <person name="Iida K."/>
            <person name="Karnes M."/>
            <person name="Khan S."/>
            <person name="Koesema E."/>
            <person name="Ishida J."/>
            <person name="Jiang P.X."/>
            <person name="Jones T."/>
            <person name="Kawai J."/>
            <person name="Kamiya A."/>
            <person name="Meyers C."/>
            <person name="Nakajima M."/>
            <person name="Narusaka M."/>
            <person name="Seki M."/>
            <person name="Sakurai T."/>
            <person name="Satou M."/>
            <person name="Tamse R."/>
            <person name="Vaysberg M."/>
            <person name="Wallender E.K."/>
            <person name="Wong C."/>
            <person name="Yamamura Y."/>
            <person name="Yuan S."/>
            <person name="Shinozaki K."/>
            <person name="Davis R.W."/>
            <person name="Theologis A."/>
            <person name="Ecker J.R."/>
        </authorList>
    </citation>
    <scope>NUCLEOTIDE SEQUENCE [LARGE SCALE MRNA]</scope>
    <source>
        <strain>cv. Columbia</strain>
    </source>
</reference>
<reference key="5">
    <citation type="submission" date="2002-03" db="EMBL/GenBank/DDBJ databases">
        <title>Full-length cDNA from Arabidopsis thaliana.</title>
        <authorList>
            <person name="Brover V.V."/>
            <person name="Troukhan M.E."/>
            <person name="Alexandrov N.A."/>
            <person name="Lu Y.-P."/>
            <person name="Flavell R.B."/>
            <person name="Feldmann K.A."/>
        </authorList>
    </citation>
    <scope>NUCLEOTIDE SEQUENCE [LARGE SCALE MRNA]</scope>
</reference>
<reference key="6">
    <citation type="journal article" date="2003" name="Plant Cell">
        <title>The Arabidopsis basic/helix-loop-helix transcription factor family.</title>
        <authorList>
            <person name="Toledo-Ortiz G."/>
            <person name="Huq E."/>
            <person name="Quail P.H."/>
        </authorList>
    </citation>
    <scope>GENE FAMILY</scope>
</reference>
<reference key="7">
    <citation type="journal article" date="2003" name="Plant Cell">
        <title>Update on the basic helix-loop-helix transcription factor gene family in Arabidopsis thaliana.</title>
        <authorList>
            <person name="Bailey P.C."/>
            <person name="Martin C."/>
            <person name="Toledo-Ortiz G."/>
            <person name="Quail P.H."/>
            <person name="Huq E."/>
            <person name="Heim M.A."/>
            <person name="Jakoby M."/>
            <person name="Werber M."/>
            <person name="Weisshaar B."/>
        </authorList>
    </citation>
    <scope>GENE FAMILY</scope>
    <scope>NOMENCLATURE</scope>
</reference>
<reference key="8">
    <citation type="journal article" date="2010" name="Plant Cell">
        <title>The bHLH transcription factor POPEYE regulates response to iron deficiency in Arabidopsis roots.</title>
        <authorList>
            <person name="Long T.A."/>
            <person name="Tsukagoshi H."/>
            <person name="Busch W."/>
            <person name="Lahner B."/>
            <person name="Salt D.E."/>
            <person name="Benfey P.N."/>
        </authorList>
    </citation>
    <scope>INTERACTION WITH BTS</scope>
    <source>
        <strain>cv. Columbia</strain>
    </source>
</reference>
<reference key="9">
    <citation type="journal article" date="2015" name="Plant Physiol.">
        <title>Iron-binding E3 ligase mediates iron response in plants by targeting basic helix-loop-helix transcription factors.</title>
        <authorList>
            <person name="Selote D."/>
            <person name="Samira R."/>
            <person name="Matthiadis A."/>
            <person name="Gillikin J.W."/>
            <person name="Long T.A."/>
        </authorList>
    </citation>
    <scope>INTERACTION WITH BTS AND BHLH47/PYE</scope>
    <scope>SUBCELLULAR LOCATION</scope>
    <source>
        <strain>cv. Columbia</strain>
    </source>
</reference>
<protein>
    <recommendedName>
        <fullName>Transcription factor bHLH115</fullName>
    </recommendedName>
    <alternativeName>
        <fullName>Basic helix-loop-helix protein 115</fullName>
        <shortName>AtbHLH115</shortName>
        <shortName>bHLH 115</shortName>
    </alternativeName>
    <alternativeName>
        <fullName>Transcription factor EN 134</fullName>
    </alternativeName>
    <alternativeName>
        <fullName>bHLH transcription factor bHLH115</fullName>
    </alternativeName>
</protein>
<keyword id="KW-0025">Alternative splicing</keyword>
<keyword id="KW-0238">DNA-binding</keyword>
<keyword id="KW-0539">Nucleus</keyword>
<keyword id="KW-1185">Reference proteome</keyword>
<keyword id="KW-0804">Transcription</keyword>
<keyword id="KW-0805">Transcription regulation</keyword>
<name>BH115_ARATH</name>
<sequence>MVSPENTNWLSDYPLIEGAFSDQNPTFPWQIDGSATVSVEVDGFLCDADVIKEPSSRKRIKTESCTGSNSKACREKQRRDRLNDKFTELSSVLEPGRTPKTDKVAIINDAIRMVNQARDEAQKLKDLNSSLQEKIKELKDEKNELRDEKQKLKVEKERIDQQLKAIKTQPQPQPCFLPNPQTLSQAQAPGSKLVPFTTYPGFAMWQFMPPAAVDTSQDHVLRPPVA</sequence>
<gene>
    <name type="primary">BHLH115</name>
    <name type="synonym">EN134</name>
    <name type="ordered locus">At1g51070</name>
    <name type="ORF">F23H24.8</name>
</gene>
<feature type="chain" id="PRO_0000358801" description="Transcription factor bHLH115">
    <location>
        <begin position="1"/>
        <end position="226"/>
    </location>
</feature>
<feature type="domain" description="bHLH" evidence="1">
    <location>
        <begin position="66"/>
        <end position="117"/>
    </location>
</feature>
<proteinExistence type="evidence at protein level"/>
<evidence type="ECO:0000255" key="1">
    <source>
        <dbReference type="PROSITE-ProRule" id="PRU00981"/>
    </source>
</evidence>
<evidence type="ECO:0000269" key="2">
    <source>
    </source>
</evidence>
<evidence type="ECO:0000269" key="3">
    <source>
    </source>
</evidence>
<evidence type="ECO:0000305" key="4"/>
<dbReference type="EMBL" id="AF488632">
    <property type="protein sequence ID" value="AAM10965.1"/>
    <property type="molecule type" value="mRNA"/>
</dbReference>
<dbReference type="EMBL" id="AC079828">
    <property type="protein sequence ID" value="AAG50538.1"/>
    <property type="molecule type" value="Genomic_DNA"/>
</dbReference>
<dbReference type="EMBL" id="CP002684">
    <property type="protein sequence ID" value="AEE32618.1"/>
    <property type="molecule type" value="Genomic_DNA"/>
</dbReference>
<dbReference type="EMBL" id="BT002433">
    <property type="protein sequence ID" value="AAO00793.1"/>
    <property type="molecule type" value="mRNA"/>
</dbReference>
<dbReference type="EMBL" id="BT006273">
    <property type="protein sequence ID" value="AAP13381.1"/>
    <property type="molecule type" value="mRNA"/>
</dbReference>
<dbReference type="EMBL" id="AY085619">
    <property type="protein sequence ID" value="AAM62840.1"/>
    <property type="molecule type" value="mRNA"/>
</dbReference>
<dbReference type="PIR" id="H96547">
    <property type="entry name" value="H96547"/>
</dbReference>
<dbReference type="RefSeq" id="NP_175518.1">
    <molecule id="Q9C682-1"/>
    <property type="nucleotide sequence ID" value="NM_103985.4"/>
</dbReference>
<dbReference type="SMR" id="Q9C682"/>
<dbReference type="BioGRID" id="26754">
    <property type="interactions" value="3"/>
</dbReference>
<dbReference type="FunCoup" id="Q9C682">
    <property type="interactions" value="73"/>
</dbReference>
<dbReference type="STRING" id="3702.Q9C682"/>
<dbReference type="EnsemblPlants" id="AT1G51070.1">
    <molecule id="Q9C682-1"/>
    <property type="protein sequence ID" value="AT1G51070.1"/>
    <property type="gene ID" value="AT1G51070"/>
</dbReference>
<dbReference type="GeneID" id="841529"/>
<dbReference type="Gramene" id="AT1G51070.1">
    <molecule id="Q9C682-1"/>
    <property type="protein sequence ID" value="AT1G51070.1"/>
    <property type="gene ID" value="AT1G51070"/>
</dbReference>
<dbReference type="KEGG" id="ath:AT1G51070"/>
<dbReference type="Araport" id="AT1G51070"/>
<dbReference type="TAIR" id="AT1G51070">
    <property type="gene designation" value="BHLH115"/>
</dbReference>
<dbReference type="eggNOG" id="ENOG502QSHF">
    <property type="taxonomic scope" value="Eukaryota"/>
</dbReference>
<dbReference type="HOGENOM" id="CLU_078927_0_0_1"/>
<dbReference type="InParanoid" id="Q9C682"/>
<dbReference type="OMA" id="INTQPCF"/>
<dbReference type="PhylomeDB" id="Q9C682"/>
<dbReference type="PRO" id="PR:Q9C682"/>
<dbReference type="Proteomes" id="UP000006548">
    <property type="component" value="Chromosome 1"/>
</dbReference>
<dbReference type="ExpressionAtlas" id="Q9C682">
    <property type="expression patterns" value="baseline and differential"/>
</dbReference>
<dbReference type="GO" id="GO:0005634">
    <property type="term" value="C:nucleus"/>
    <property type="evidence" value="ECO:0000314"/>
    <property type="project" value="UniProtKB"/>
</dbReference>
<dbReference type="GO" id="GO:0003677">
    <property type="term" value="F:DNA binding"/>
    <property type="evidence" value="ECO:0007669"/>
    <property type="project" value="UniProtKB-KW"/>
</dbReference>
<dbReference type="GO" id="GO:0003700">
    <property type="term" value="F:DNA-binding transcription factor activity"/>
    <property type="evidence" value="ECO:0007669"/>
    <property type="project" value="InterPro"/>
</dbReference>
<dbReference type="GO" id="GO:0046983">
    <property type="term" value="F:protein dimerization activity"/>
    <property type="evidence" value="ECO:0007669"/>
    <property type="project" value="InterPro"/>
</dbReference>
<dbReference type="GO" id="GO:0006879">
    <property type="term" value="P:intracellular iron ion homeostasis"/>
    <property type="evidence" value="ECO:0007669"/>
    <property type="project" value="InterPro"/>
</dbReference>
<dbReference type="CDD" id="cd11446">
    <property type="entry name" value="bHLH_AtILR3_like"/>
    <property type="match status" value="1"/>
</dbReference>
<dbReference type="FunFam" id="4.10.280.10:FF:000165">
    <property type="entry name" value="Transcription factor bHLH104"/>
    <property type="match status" value="1"/>
</dbReference>
<dbReference type="Gene3D" id="4.10.280.10">
    <property type="entry name" value="Helix-loop-helix DNA-binding domain"/>
    <property type="match status" value="1"/>
</dbReference>
<dbReference type="InterPro" id="IPR011598">
    <property type="entry name" value="bHLH_dom"/>
</dbReference>
<dbReference type="InterPro" id="IPR036638">
    <property type="entry name" value="HLH_DNA-bd_sf"/>
</dbReference>
<dbReference type="InterPro" id="IPR044818">
    <property type="entry name" value="ILR3-like"/>
</dbReference>
<dbReference type="PANTHER" id="PTHR46133">
    <property type="entry name" value="BHLH TRANSCRIPTION FACTOR"/>
    <property type="match status" value="1"/>
</dbReference>
<dbReference type="PANTHER" id="PTHR46133:SF13">
    <property type="entry name" value="TRANSCRIPTION FACTOR BHLH115"/>
    <property type="match status" value="1"/>
</dbReference>
<dbReference type="Pfam" id="PF00010">
    <property type="entry name" value="HLH"/>
    <property type="match status" value="1"/>
</dbReference>
<dbReference type="SMART" id="SM00353">
    <property type="entry name" value="HLH"/>
    <property type="match status" value="1"/>
</dbReference>
<dbReference type="SUPFAM" id="SSF47459">
    <property type="entry name" value="HLH, helix-loop-helix DNA-binding domain"/>
    <property type="match status" value="1"/>
</dbReference>
<dbReference type="PROSITE" id="PS50888">
    <property type="entry name" value="BHLH"/>
    <property type="match status" value="1"/>
</dbReference>